<feature type="chain" id="PRO_0000367641" description="Glutamate--tRNA ligase 2">
    <location>
        <begin position="1"/>
        <end position="463"/>
    </location>
</feature>
<feature type="short sequence motif" description="'HIGH' region" evidence="1">
    <location>
        <begin position="11"/>
        <end position="21"/>
    </location>
</feature>
<feature type="short sequence motif" description="'KMSKS' region" evidence="1">
    <location>
        <begin position="240"/>
        <end position="244"/>
    </location>
</feature>
<feature type="binding site" evidence="1">
    <location>
        <position position="243"/>
    </location>
    <ligand>
        <name>ATP</name>
        <dbReference type="ChEBI" id="CHEBI:30616"/>
    </ligand>
</feature>
<protein>
    <recommendedName>
        <fullName evidence="1">Glutamate--tRNA ligase 2</fullName>
        <ecNumber evidence="1">6.1.1.17</ecNumber>
    </recommendedName>
    <alternativeName>
        <fullName evidence="1">Glutamyl-tRNA synthetase 2</fullName>
        <shortName evidence="1">GluRS 2</shortName>
    </alternativeName>
</protein>
<keyword id="KW-0030">Aminoacyl-tRNA synthetase</keyword>
<keyword id="KW-0067">ATP-binding</keyword>
<keyword id="KW-0963">Cytoplasm</keyword>
<keyword id="KW-0436">Ligase</keyword>
<keyword id="KW-0547">Nucleotide-binding</keyword>
<keyword id="KW-0648">Protein biosynthesis</keyword>
<proteinExistence type="inferred from homology"/>
<reference key="1">
    <citation type="submission" date="2006-12" db="EMBL/GenBank/DDBJ databases">
        <authorList>
            <person name="Fouts D.E."/>
            <person name="Nelson K.E."/>
            <person name="Sebastian Y."/>
        </authorList>
    </citation>
    <scope>NUCLEOTIDE SEQUENCE [LARGE SCALE GENOMIC DNA]</scope>
    <source>
        <strain>81-176</strain>
    </source>
</reference>
<evidence type="ECO:0000255" key="1">
    <source>
        <dbReference type="HAMAP-Rule" id="MF_00022"/>
    </source>
</evidence>
<gene>
    <name evidence="1" type="primary">gltX2</name>
    <name type="ordered locus">CJJ81176_1305</name>
</gene>
<accession>A1W0S2</accession>
<name>SYE2_CAMJJ</name>
<comment type="function">
    <text evidence="1">Catalyzes the attachment of glutamate to tRNA(Glu) in a two-step reaction: glutamate is first activated by ATP to form Glu-AMP and then transferred to the acceptor end of tRNA(Glu).</text>
</comment>
<comment type="catalytic activity">
    <reaction evidence="1">
        <text>tRNA(Glu) + L-glutamate + ATP = L-glutamyl-tRNA(Glu) + AMP + diphosphate</text>
        <dbReference type="Rhea" id="RHEA:23540"/>
        <dbReference type="Rhea" id="RHEA-COMP:9663"/>
        <dbReference type="Rhea" id="RHEA-COMP:9680"/>
        <dbReference type="ChEBI" id="CHEBI:29985"/>
        <dbReference type="ChEBI" id="CHEBI:30616"/>
        <dbReference type="ChEBI" id="CHEBI:33019"/>
        <dbReference type="ChEBI" id="CHEBI:78442"/>
        <dbReference type="ChEBI" id="CHEBI:78520"/>
        <dbReference type="ChEBI" id="CHEBI:456215"/>
        <dbReference type="EC" id="6.1.1.17"/>
    </reaction>
</comment>
<comment type="subunit">
    <text evidence="1">Monomer.</text>
</comment>
<comment type="subcellular location">
    <subcellularLocation>
        <location evidence="1">Cytoplasm</location>
    </subcellularLocation>
</comment>
<comment type="similarity">
    <text evidence="1">Belongs to the class-I aminoacyl-tRNA synthetase family. Glutamate--tRNA ligase type 1 subfamily.</text>
</comment>
<dbReference type="EC" id="6.1.1.17" evidence="1"/>
<dbReference type="EMBL" id="CP000538">
    <property type="protein sequence ID" value="EAQ72879.1"/>
    <property type="molecule type" value="Genomic_DNA"/>
</dbReference>
<dbReference type="SMR" id="A1W0S2"/>
<dbReference type="KEGG" id="cjj:CJJ81176_1305"/>
<dbReference type="eggNOG" id="COG0008">
    <property type="taxonomic scope" value="Bacteria"/>
</dbReference>
<dbReference type="HOGENOM" id="CLU_015768_6_0_7"/>
<dbReference type="Proteomes" id="UP000000646">
    <property type="component" value="Chromosome"/>
</dbReference>
<dbReference type="GO" id="GO:0005829">
    <property type="term" value="C:cytosol"/>
    <property type="evidence" value="ECO:0007669"/>
    <property type="project" value="TreeGrafter"/>
</dbReference>
<dbReference type="GO" id="GO:0005524">
    <property type="term" value="F:ATP binding"/>
    <property type="evidence" value="ECO:0007669"/>
    <property type="project" value="UniProtKB-UniRule"/>
</dbReference>
<dbReference type="GO" id="GO:0004818">
    <property type="term" value="F:glutamate-tRNA ligase activity"/>
    <property type="evidence" value="ECO:0007669"/>
    <property type="project" value="UniProtKB-UniRule"/>
</dbReference>
<dbReference type="GO" id="GO:0000049">
    <property type="term" value="F:tRNA binding"/>
    <property type="evidence" value="ECO:0007669"/>
    <property type="project" value="InterPro"/>
</dbReference>
<dbReference type="GO" id="GO:0008270">
    <property type="term" value="F:zinc ion binding"/>
    <property type="evidence" value="ECO:0007669"/>
    <property type="project" value="InterPro"/>
</dbReference>
<dbReference type="GO" id="GO:0006424">
    <property type="term" value="P:glutamyl-tRNA aminoacylation"/>
    <property type="evidence" value="ECO:0007669"/>
    <property type="project" value="UniProtKB-UniRule"/>
</dbReference>
<dbReference type="CDD" id="cd00808">
    <property type="entry name" value="GluRS_core"/>
    <property type="match status" value="1"/>
</dbReference>
<dbReference type="FunFam" id="3.40.50.620:FF:000007">
    <property type="entry name" value="Glutamate--tRNA ligase"/>
    <property type="match status" value="1"/>
</dbReference>
<dbReference type="Gene3D" id="1.10.10.350">
    <property type="match status" value="1"/>
</dbReference>
<dbReference type="Gene3D" id="3.40.50.620">
    <property type="entry name" value="HUPs"/>
    <property type="match status" value="1"/>
</dbReference>
<dbReference type="HAMAP" id="MF_00022">
    <property type="entry name" value="Glu_tRNA_synth_type1"/>
    <property type="match status" value="1"/>
</dbReference>
<dbReference type="InterPro" id="IPR045462">
    <property type="entry name" value="aa-tRNA-synth_I_cd-bd"/>
</dbReference>
<dbReference type="InterPro" id="IPR020751">
    <property type="entry name" value="aa-tRNA-synth_I_codon-bd_sub2"/>
</dbReference>
<dbReference type="InterPro" id="IPR001412">
    <property type="entry name" value="aa-tRNA-synth_I_CS"/>
</dbReference>
<dbReference type="InterPro" id="IPR008925">
    <property type="entry name" value="aa_tRNA-synth_I_cd-bd_sf"/>
</dbReference>
<dbReference type="InterPro" id="IPR004527">
    <property type="entry name" value="Glu-tRNA-ligase_bac/mito"/>
</dbReference>
<dbReference type="InterPro" id="IPR000924">
    <property type="entry name" value="Glu/Gln-tRNA-synth"/>
</dbReference>
<dbReference type="InterPro" id="IPR020058">
    <property type="entry name" value="Glu/Gln-tRNA-synth_Ib_cat-dom"/>
</dbReference>
<dbReference type="InterPro" id="IPR049940">
    <property type="entry name" value="GluQ/Sye"/>
</dbReference>
<dbReference type="InterPro" id="IPR033910">
    <property type="entry name" value="GluRS_core"/>
</dbReference>
<dbReference type="InterPro" id="IPR014729">
    <property type="entry name" value="Rossmann-like_a/b/a_fold"/>
</dbReference>
<dbReference type="NCBIfam" id="TIGR00464">
    <property type="entry name" value="gltX_bact"/>
    <property type="match status" value="1"/>
</dbReference>
<dbReference type="PANTHER" id="PTHR43311">
    <property type="entry name" value="GLUTAMATE--TRNA LIGASE"/>
    <property type="match status" value="1"/>
</dbReference>
<dbReference type="PANTHER" id="PTHR43311:SF2">
    <property type="entry name" value="GLUTAMATE--TRNA LIGASE, MITOCHONDRIAL-RELATED"/>
    <property type="match status" value="1"/>
</dbReference>
<dbReference type="Pfam" id="PF19269">
    <property type="entry name" value="Anticodon_2"/>
    <property type="match status" value="1"/>
</dbReference>
<dbReference type="Pfam" id="PF00749">
    <property type="entry name" value="tRNA-synt_1c"/>
    <property type="match status" value="1"/>
</dbReference>
<dbReference type="PRINTS" id="PR00987">
    <property type="entry name" value="TRNASYNTHGLU"/>
</dbReference>
<dbReference type="SUPFAM" id="SSF48163">
    <property type="entry name" value="An anticodon-binding domain of class I aminoacyl-tRNA synthetases"/>
    <property type="match status" value="1"/>
</dbReference>
<dbReference type="SUPFAM" id="SSF52374">
    <property type="entry name" value="Nucleotidylyl transferase"/>
    <property type="match status" value="1"/>
</dbReference>
<dbReference type="PROSITE" id="PS00178">
    <property type="entry name" value="AA_TRNA_LIGASE_I"/>
    <property type="match status" value="1"/>
</dbReference>
<sequence length="463" mass="53060">MHEKLTTRFAPSPTGYLHIGGLRTALYNYLYARKNGGNFLLRIEDTDLKRNSKEATKAIIEAFKWCGLEHDGEVTYQSERFDLYKEYVKKLLDEGKAYYCYMSKEELEELRAKQEAAKERPRYDGRYREFTGTPPQGIEPVVRIKAPQSGEIVFEDGVKGEVRFKAEDIMDDFIIARSDGTPTYNFTVVIDDALMGVSDVIRGDDHLSNTPKQIVLYEALGFKIPKFFHVAMIHGEDGKKLSKRHGATDVMEYKEMGILPQALLNFLVRLGWSHGDDEVFSLEDLKKLFDPYHINKSASCYNAKKLEWLNAHYIKTLPFEEINRQLKDLGFDLSVYEKAGFLLDLLRERAKTLHDIINGAKSIVNAPQNYDENAVQKFVNENNLELLQAFANTLKDQKTGKDFEDFTNDFLEKKEAKLKDLAQPIRIALTGSAVSPSIFEVLEFLGVDECKKRIDNFLKVRGK</sequence>
<organism>
    <name type="scientific">Campylobacter jejuni subsp. jejuni serotype O:23/36 (strain 81-176)</name>
    <dbReference type="NCBI Taxonomy" id="354242"/>
    <lineage>
        <taxon>Bacteria</taxon>
        <taxon>Pseudomonadati</taxon>
        <taxon>Campylobacterota</taxon>
        <taxon>Epsilonproteobacteria</taxon>
        <taxon>Campylobacterales</taxon>
        <taxon>Campylobacteraceae</taxon>
        <taxon>Campylobacter</taxon>
    </lineage>
</organism>